<protein>
    <recommendedName>
        <fullName>F-box protein At4g02760</fullName>
    </recommendedName>
</protein>
<evidence type="ECO:0000256" key="1">
    <source>
        <dbReference type="SAM" id="MobiDB-lite"/>
    </source>
</evidence>
<evidence type="ECO:0000305" key="2"/>
<accession>Q9SY03</accession>
<sequence>MDAPNPKRPCLVPLGTSSIENPCSLPIAPDFNQSNIDLTISSFLSLSDLPLFSLPLSIGCSFDRVLDNVIPSIAGTSRDEFDQDRFLDRTLQLASLLYKSTKRCIRKRATLQNSTSWPLLPELTIKVFSMLDTKSLMQASACCTMFNKCAMDRVCYSHIDLTTAAEDVDNGVVCVMIHRAGKELRSLKLGSISSSAEPTTSLLTRSCLTPLTFNHGFTGGHLRSLHLYHLRMIDCGSLSPVLSACLNLTDLKIVGLDNPLEQLGLLTRNCRLIEHLFIEIYGAAGLITDSSLLEFAANCPNLSSISLLGFLLNDAILQKLIKGFRRLKHINLSSSPEISGCFFRGLELCGKDSPLETLILRDCYILKESEVLLFLNSLLAGDFKYIRLIDVSNVDGLVCDGGNRTFEPRFPIEELKKQRSNVTFVAIFESQSSLSSSRFPLEELNKERPGLTFVAEFRSPSPSESDVRSPSPSSSSDSSSSSDSSSSSSSGESSDESGTEEEEDED</sequence>
<keyword id="KW-0025">Alternative splicing</keyword>
<keyword id="KW-1185">Reference proteome</keyword>
<dbReference type="EMBL" id="AC004044">
    <property type="protein sequence ID" value="AAD15350.1"/>
    <property type="status" value="ALT_SEQ"/>
    <property type="molecule type" value="Genomic_DNA"/>
</dbReference>
<dbReference type="EMBL" id="AL161495">
    <property type="protein sequence ID" value="CAB77761.1"/>
    <property type="status" value="ALT_SEQ"/>
    <property type="molecule type" value="Genomic_DNA"/>
</dbReference>
<dbReference type="EMBL" id="CP002687">
    <property type="protein sequence ID" value="AEE82226.1"/>
    <property type="molecule type" value="Genomic_DNA"/>
</dbReference>
<dbReference type="PIR" id="B85035">
    <property type="entry name" value="B85035"/>
</dbReference>
<dbReference type="RefSeq" id="NP_001078348.4">
    <molecule id="Q9SY03-1"/>
    <property type="nucleotide sequence ID" value="NM_001084879.5"/>
</dbReference>
<dbReference type="SMR" id="Q9SY03"/>
<dbReference type="FunCoup" id="Q9SY03">
    <property type="interactions" value="260"/>
</dbReference>
<dbReference type="STRING" id="3702.Q9SY03"/>
<dbReference type="PaxDb" id="3702-AT4G02760.3"/>
<dbReference type="ProteomicsDB" id="230891">
    <molecule id="Q9SY03-1"/>
</dbReference>
<dbReference type="EnsemblPlants" id="AT4G02760.2">
    <molecule id="Q9SY03-1"/>
    <property type="protein sequence ID" value="AT4G02760.2"/>
    <property type="gene ID" value="AT4G02760"/>
</dbReference>
<dbReference type="GeneID" id="828184"/>
<dbReference type="Gramene" id="AT4G02760.2">
    <molecule id="Q9SY03-1"/>
    <property type="protein sequence ID" value="AT4G02760.2"/>
    <property type="gene ID" value="AT4G02760"/>
</dbReference>
<dbReference type="KEGG" id="ath:AT4G02760"/>
<dbReference type="Araport" id="AT4G02760"/>
<dbReference type="TAIR" id="AT4G02760"/>
<dbReference type="eggNOG" id="KOG4341">
    <property type="taxonomic scope" value="Eukaryota"/>
</dbReference>
<dbReference type="HOGENOM" id="CLU_027914_0_0_1"/>
<dbReference type="InParanoid" id="Q9SY03"/>
<dbReference type="PhylomeDB" id="Q9SY03"/>
<dbReference type="PRO" id="PR:Q9SY03"/>
<dbReference type="Proteomes" id="UP000006548">
    <property type="component" value="Chromosome 4"/>
</dbReference>
<dbReference type="ExpressionAtlas" id="Q9SY03">
    <property type="expression patterns" value="baseline and differential"/>
</dbReference>
<dbReference type="Gene3D" id="3.80.10.10">
    <property type="entry name" value="Ribonuclease Inhibitor"/>
    <property type="match status" value="1"/>
</dbReference>
<dbReference type="InterPro" id="IPR036047">
    <property type="entry name" value="F-box-like_dom_sf"/>
</dbReference>
<dbReference type="InterPro" id="IPR032675">
    <property type="entry name" value="LRR_dom_sf"/>
</dbReference>
<dbReference type="PANTHER" id="PTHR16134:SF73">
    <property type="entry name" value="F-BOX DOMAIN-CONTAINING PROTEIN"/>
    <property type="match status" value="1"/>
</dbReference>
<dbReference type="PANTHER" id="PTHR16134">
    <property type="entry name" value="F-BOX/TPR REPEAT PROTEIN POF3"/>
    <property type="match status" value="1"/>
</dbReference>
<dbReference type="SUPFAM" id="SSF81383">
    <property type="entry name" value="F-box domain"/>
    <property type="match status" value="1"/>
</dbReference>
<dbReference type="SUPFAM" id="SSF52047">
    <property type="entry name" value="RNI-like"/>
    <property type="match status" value="1"/>
</dbReference>
<comment type="alternative products">
    <event type="alternative splicing"/>
    <isoform>
        <id>Q9SY03-1</id>
        <name>1</name>
        <sequence type="displayed"/>
    </isoform>
    <text>A number of isoforms are produced. According to EST sequences.</text>
</comment>
<comment type="sequence caution" evidence="2">
    <conflict type="erroneous gene model prediction">
        <sequence resource="EMBL-CDS" id="AAD15350"/>
    </conflict>
</comment>
<comment type="sequence caution" evidence="2">
    <conflict type="erroneous gene model prediction">
        <sequence resource="EMBL-CDS" id="CAB77761"/>
    </conflict>
</comment>
<proteinExistence type="predicted"/>
<name>FB219_ARATH</name>
<organism>
    <name type="scientific">Arabidopsis thaliana</name>
    <name type="common">Mouse-ear cress</name>
    <dbReference type="NCBI Taxonomy" id="3702"/>
    <lineage>
        <taxon>Eukaryota</taxon>
        <taxon>Viridiplantae</taxon>
        <taxon>Streptophyta</taxon>
        <taxon>Embryophyta</taxon>
        <taxon>Tracheophyta</taxon>
        <taxon>Spermatophyta</taxon>
        <taxon>Magnoliopsida</taxon>
        <taxon>eudicotyledons</taxon>
        <taxon>Gunneridae</taxon>
        <taxon>Pentapetalae</taxon>
        <taxon>rosids</taxon>
        <taxon>malvids</taxon>
        <taxon>Brassicales</taxon>
        <taxon>Brassicaceae</taxon>
        <taxon>Camelineae</taxon>
        <taxon>Arabidopsis</taxon>
    </lineage>
</organism>
<feature type="chain" id="PRO_0000283488" description="F-box protein At4g02760">
    <location>
        <begin position="1"/>
        <end position="506"/>
    </location>
</feature>
<feature type="domain" description="F-box">
    <location>
        <begin position="115"/>
        <end position="161"/>
    </location>
</feature>
<feature type="region of interest" description="Disordered" evidence="1">
    <location>
        <begin position="452"/>
        <end position="506"/>
    </location>
</feature>
<feature type="compositionally biased region" description="Low complexity" evidence="1">
    <location>
        <begin position="459"/>
        <end position="492"/>
    </location>
</feature>
<feature type="compositionally biased region" description="Acidic residues" evidence="1">
    <location>
        <begin position="493"/>
        <end position="506"/>
    </location>
</feature>
<reference key="1">
    <citation type="journal article" date="1999" name="Nature">
        <title>Sequence and analysis of chromosome 4 of the plant Arabidopsis thaliana.</title>
        <authorList>
            <person name="Mayer K.F.X."/>
            <person name="Schueller C."/>
            <person name="Wambutt R."/>
            <person name="Murphy G."/>
            <person name="Volckaert G."/>
            <person name="Pohl T."/>
            <person name="Duesterhoeft A."/>
            <person name="Stiekema W."/>
            <person name="Entian K.-D."/>
            <person name="Terryn N."/>
            <person name="Harris B."/>
            <person name="Ansorge W."/>
            <person name="Brandt P."/>
            <person name="Grivell L.A."/>
            <person name="Rieger M."/>
            <person name="Weichselgartner M."/>
            <person name="de Simone V."/>
            <person name="Obermaier B."/>
            <person name="Mache R."/>
            <person name="Mueller M."/>
            <person name="Kreis M."/>
            <person name="Delseny M."/>
            <person name="Puigdomenech P."/>
            <person name="Watson M."/>
            <person name="Schmidtheini T."/>
            <person name="Reichert B."/>
            <person name="Portetelle D."/>
            <person name="Perez-Alonso M."/>
            <person name="Boutry M."/>
            <person name="Bancroft I."/>
            <person name="Vos P."/>
            <person name="Hoheisel J."/>
            <person name="Zimmermann W."/>
            <person name="Wedler H."/>
            <person name="Ridley P."/>
            <person name="Langham S.-A."/>
            <person name="McCullagh B."/>
            <person name="Bilham L."/>
            <person name="Robben J."/>
            <person name="van der Schueren J."/>
            <person name="Grymonprez B."/>
            <person name="Chuang Y.-J."/>
            <person name="Vandenbussche F."/>
            <person name="Braeken M."/>
            <person name="Weltjens I."/>
            <person name="Voet M."/>
            <person name="Bastiaens I."/>
            <person name="Aert R."/>
            <person name="Defoor E."/>
            <person name="Weitzenegger T."/>
            <person name="Bothe G."/>
            <person name="Ramsperger U."/>
            <person name="Hilbert H."/>
            <person name="Braun M."/>
            <person name="Holzer E."/>
            <person name="Brandt A."/>
            <person name="Peters S."/>
            <person name="van Staveren M."/>
            <person name="Dirkse W."/>
            <person name="Mooijman P."/>
            <person name="Klein Lankhorst R."/>
            <person name="Rose M."/>
            <person name="Hauf J."/>
            <person name="Koetter P."/>
            <person name="Berneiser S."/>
            <person name="Hempel S."/>
            <person name="Feldpausch M."/>
            <person name="Lamberth S."/>
            <person name="Van den Daele H."/>
            <person name="De Keyser A."/>
            <person name="Buysshaert C."/>
            <person name="Gielen J."/>
            <person name="Villarroel R."/>
            <person name="De Clercq R."/>
            <person name="van Montagu M."/>
            <person name="Rogers J."/>
            <person name="Cronin A."/>
            <person name="Quail M.A."/>
            <person name="Bray-Allen S."/>
            <person name="Clark L."/>
            <person name="Doggett J."/>
            <person name="Hall S."/>
            <person name="Kay M."/>
            <person name="Lennard N."/>
            <person name="McLay K."/>
            <person name="Mayes R."/>
            <person name="Pettett A."/>
            <person name="Rajandream M.A."/>
            <person name="Lyne M."/>
            <person name="Benes V."/>
            <person name="Rechmann S."/>
            <person name="Borkova D."/>
            <person name="Bloecker H."/>
            <person name="Scharfe M."/>
            <person name="Grimm M."/>
            <person name="Loehnert T.-H."/>
            <person name="Dose S."/>
            <person name="de Haan M."/>
            <person name="Maarse A.C."/>
            <person name="Schaefer M."/>
            <person name="Mueller-Auer S."/>
            <person name="Gabel C."/>
            <person name="Fuchs M."/>
            <person name="Fartmann B."/>
            <person name="Granderath K."/>
            <person name="Dauner D."/>
            <person name="Herzl A."/>
            <person name="Neumann S."/>
            <person name="Argiriou A."/>
            <person name="Vitale D."/>
            <person name="Liguori R."/>
            <person name="Piravandi E."/>
            <person name="Massenet O."/>
            <person name="Quigley F."/>
            <person name="Clabauld G."/>
            <person name="Muendlein A."/>
            <person name="Felber R."/>
            <person name="Schnabl S."/>
            <person name="Hiller R."/>
            <person name="Schmidt W."/>
            <person name="Lecharny A."/>
            <person name="Aubourg S."/>
            <person name="Chefdor F."/>
            <person name="Cooke R."/>
            <person name="Berger C."/>
            <person name="Monfort A."/>
            <person name="Casacuberta E."/>
            <person name="Gibbons T."/>
            <person name="Weber N."/>
            <person name="Vandenbol M."/>
            <person name="Bargues M."/>
            <person name="Terol J."/>
            <person name="Torres A."/>
            <person name="Perez-Perez A."/>
            <person name="Purnelle B."/>
            <person name="Bent E."/>
            <person name="Johnson S."/>
            <person name="Tacon D."/>
            <person name="Jesse T."/>
            <person name="Heijnen L."/>
            <person name="Schwarz S."/>
            <person name="Scholler P."/>
            <person name="Heber S."/>
            <person name="Francs P."/>
            <person name="Bielke C."/>
            <person name="Frishman D."/>
            <person name="Haase D."/>
            <person name="Lemcke K."/>
            <person name="Mewes H.-W."/>
            <person name="Stocker S."/>
            <person name="Zaccaria P."/>
            <person name="Bevan M."/>
            <person name="Wilson R.K."/>
            <person name="de la Bastide M."/>
            <person name="Habermann K."/>
            <person name="Parnell L."/>
            <person name="Dedhia N."/>
            <person name="Gnoj L."/>
            <person name="Schutz K."/>
            <person name="Huang E."/>
            <person name="Spiegel L."/>
            <person name="Sekhon M."/>
            <person name="Murray J."/>
            <person name="Sheet P."/>
            <person name="Cordes M."/>
            <person name="Abu-Threideh J."/>
            <person name="Stoneking T."/>
            <person name="Kalicki J."/>
            <person name="Graves T."/>
            <person name="Harmon G."/>
            <person name="Edwards J."/>
            <person name="Latreille P."/>
            <person name="Courtney L."/>
            <person name="Cloud J."/>
            <person name="Abbott A."/>
            <person name="Scott K."/>
            <person name="Johnson D."/>
            <person name="Minx P."/>
            <person name="Bentley D."/>
            <person name="Fulton B."/>
            <person name="Miller N."/>
            <person name="Greco T."/>
            <person name="Kemp K."/>
            <person name="Kramer J."/>
            <person name="Fulton L."/>
            <person name="Mardis E."/>
            <person name="Dante M."/>
            <person name="Pepin K."/>
            <person name="Hillier L.W."/>
            <person name="Nelson J."/>
            <person name="Spieth J."/>
            <person name="Ryan E."/>
            <person name="Andrews S."/>
            <person name="Geisel C."/>
            <person name="Layman D."/>
            <person name="Du H."/>
            <person name="Ali J."/>
            <person name="Berghoff A."/>
            <person name="Jones K."/>
            <person name="Drone K."/>
            <person name="Cotton M."/>
            <person name="Joshu C."/>
            <person name="Antonoiu B."/>
            <person name="Zidanic M."/>
            <person name="Strong C."/>
            <person name="Sun H."/>
            <person name="Lamar B."/>
            <person name="Yordan C."/>
            <person name="Ma P."/>
            <person name="Zhong J."/>
            <person name="Preston R."/>
            <person name="Vil D."/>
            <person name="Shekher M."/>
            <person name="Matero A."/>
            <person name="Shah R."/>
            <person name="Swaby I.K."/>
            <person name="O'Shaughnessy A."/>
            <person name="Rodriguez M."/>
            <person name="Hoffman J."/>
            <person name="Till S."/>
            <person name="Granat S."/>
            <person name="Shohdy N."/>
            <person name="Hasegawa A."/>
            <person name="Hameed A."/>
            <person name="Lodhi M."/>
            <person name="Johnson A."/>
            <person name="Chen E."/>
            <person name="Marra M.A."/>
            <person name="Martienssen R."/>
            <person name="McCombie W.R."/>
        </authorList>
    </citation>
    <scope>NUCLEOTIDE SEQUENCE [LARGE SCALE GENOMIC DNA]</scope>
    <source>
        <strain>cv. Columbia</strain>
    </source>
</reference>
<reference key="2">
    <citation type="journal article" date="2017" name="Plant J.">
        <title>Araport11: a complete reannotation of the Arabidopsis thaliana reference genome.</title>
        <authorList>
            <person name="Cheng C.Y."/>
            <person name="Krishnakumar V."/>
            <person name="Chan A.P."/>
            <person name="Thibaud-Nissen F."/>
            <person name="Schobel S."/>
            <person name="Town C.D."/>
        </authorList>
    </citation>
    <scope>GENOME REANNOTATION</scope>
    <source>
        <strain>cv. Columbia</strain>
    </source>
</reference>
<gene>
    <name type="ordered locus">At4g02760</name>
    <name type="ORF">T5J8.6</name>
</gene>